<organism>
    <name type="scientific">Sicarius peruensis</name>
    <name type="common">Six-eyed sand spider</name>
    <dbReference type="NCBI Taxonomy" id="571541"/>
    <lineage>
        <taxon>Eukaryota</taxon>
        <taxon>Metazoa</taxon>
        <taxon>Ecdysozoa</taxon>
        <taxon>Arthropoda</taxon>
        <taxon>Chelicerata</taxon>
        <taxon>Arachnida</taxon>
        <taxon>Araneae</taxon>
        <taxon>Araneomorphae</taxon>
        <taxon>Haplogynae</taxon>
        <taxon>Scytodoidea</taxon>
        <taxon>Sicariidae</taxon>
        <taxon>Sicarius</taxon>
    </lineage>
</organism>
<keyword id="KW-0204">Cytolysis</keyword>
<keyword id="KW-1061">Dermonecrotic toxin</keyword>
<keyword id="KW-1015">Disulfide bond</keyword>
<keyword id="KW-0354">Hemolysis</keyword>
<keyword id="KW-0442">Lipid degradation</keyword>
<keyword id="KW-0443">Lipid metabolism</keyword>
<keyword id="KW-0456">Lyase</keyword>
<keyword id="KW-0460">Magnesium</keyword>
<keyword id="KW-0479">Metal-binding</keyword>
<keyword id="KW-0964">Secreted</keyword>
<keyword id="KW-0800">Toxin</keyword>
<comment type="function">
    <text evidence="1 3">Dermonecrotic toxins cleave the phosphodiester linkage between the phosphate and headgroup of certain phospholipids (sphingolipid and lysolipid substrates), forming an alcohol (often choline) and a cyclic phosphate (By similarity). This toxin acts on sphingomyelin (SM) (By similarity). It may also act on ceramide phosphoethanolamine (CPE), lysophosphatidylcholine (LPC) and lysophosphatidylethanolamine (LPE), but not on lysophosphatidylserine (LPS), and lysophosphatidylglycerol (LPG) (By similarity). It acts by transphosphatidylation, releasing exclusively cyclic phosphate products as second products (By similarity). Induces dermonecrosis, hemolysis, increased vascular permeability, edema, inflammatory response, and platelet aggregation (By similarity).</text>
</comment>
<comment type="catalytic activity">
    <reaction evidence="1">
        <text>an N-(acyl)-sphingosylphosphocholine = an N-(acyl)-sphingosyl-1,3-cyclic phosphate + choline</text>
        <dbReference type="Rhea" id="RHEA:60652"/>
        <dbReference type="ChEBI" id="CHEBI:15354"/>
        <dbReference type="ChEBI" id="CHEBI:64583"/>
        <dbReference type="ChEBI" id="CHEBI:143892"/>
    </reaction>
</comment>
<comment type="catalytic activity">
    <reaction evidence="1">
        <text>an N-(acyl)-sphingosylphosphoethanolamine = an N-(acyl)-sphingosyl-1,3-cyclic phosphate + ethanolamine</text>
        <dbReference type="Rhea" id="RHEA:60648"/>
        <dbReference type="ChEBI" id="CHEBI:57603"/>
        <dbReference type="ChEBI" id="CHEBI:143891"/>
        <dbReference type="ChEBI" id="CHEBI:143892"/>
    </reaction>
</comment>
<comment type="catalytic activity">
    <reaction evidence="1">
        <text>a 1-acyl-sn-glycero-3-phosphocholine = a 1-acyl-sn-glycero-2,3-cyclic phosphate + choline</text>
        <dbReference type="Rhea" id="RHEA:60700"/>
        <dbReference type="ChEBI" id="CHEBI:15354"/>
        <dbReference type="ChEBI" id="CHEBI:58168"/>
        <dbReference type="ChEBI" id="CHEBI:143947"/>
    </reaction>
</comment>
<comment type="catalytic activity">
    <reaction evidence="1">
        <text>a 1-acyl-sn-glycero-3-phosphoethanolamine = a 1-acyl-sn-glycero-2,3-cyclic phosphate + ethanolamine</text>
        <dbReference type="Rhea" id="RHEA:60704"/>
        <dbReference type="ChEBI" id="CHEBI:57603"/>
        <dbReference type="ChEBI" id="CHEBI:64381"/>
        <dbReference type="ChEBI" id="CHEBI:143947"/>
    </reaction>
</comment>
<comment type="cofactor">
    <cofactor evidence="5">
        <name>Mg(2+)</name>
        <dbReference type="ChEBI" id="CHEBI:18420"/>
    </cofactor>
    <text evidence="5">Binds 1 Mg(2+) ion per subunit.</text>
</comment>
<comment type="subcellular location">
    <subcellularLocation>
        <location evidence="8">Secreted</location>
    </subcellularLocation>
</comment>
<comment type="tissue specificity">
    <text evidence="8">Expressed by the venom gland.</text>
</comment>
<comment type="similarity">
    <text evidence="7">Belongs to the arthropod phospholipase D family. Class II subfamily.</text>
</comment>
<comment type="caution">
    <text evidence="1 2 4">The most common activity assay for dermonecrotic toxins detects enzymatic activity by monitoring choline release from substrate. Liberation of choline from sphingomyelin (SM) or lysophosphatidylcholine (LPC) is commonly assumed to result from substrate hydrolysis, giving either ceramide-1-phosphate (C1P) or lysophosphatidic acid (LPA), respectively, as a second product. However, two studies from Lajoie and colleagues (2013 and 2015) report the observation of exclusive formation of cyclic phosphate products as second products, resulting from intramolecular transphosphatidylation. Cyclic phosphates have vastly different biological properties from their monoester counterparts, and they may be relevant to the pathology of brown spider envenomation.</text>
</comment>
<evidence type="ECO:0000250" key="1">
    <source>
        <dbReference type="UniProtKB" id="A0A0D4WTV1"/>
    </source>
</evidence>
<evidence type="ECO:0000250" key="2">
    <source>
        <dbReference type="UniProtKB" id="A0A0D4WV12"/>
    </source>
</evidence>
<evidence type="ECO:0000250" key="3">
    <source>
        <dbReference type="UniProtKB" id="P0CE80"/>
    </source>
</evidence>
<evidence type="ECO:0000250" key="4">
    <source>
        <dbReference type="UniProtKB" id="Q4ZFU2"/>
    </source>
</evidence>
<evidence type="ECO:0000250" key="5">
    <source>
        <dbReference type="UniProtKB" id="Q8I914"/>
    </source>
</evidence>
<evidence type="ECO:0000303" key="6">
    <source>
    </source>
</evidence>
<evidence type="ECO:0000305" key="7"/>
<evidence type="ECO:0000305" key="8">
    <source>
    </source>
</evidence>
<reference key="1">
    <citation type="journal article" date="2009" name="Mol. Biol. Evol.">
        <title>Molecular evolution, functional variation, and proposed nomenclature of the gene family that includes sphingomyelinase D in sicariid spider venoms.</title>
        <authorList>
            <person name="Binford G.J."/>
            <person name="Bodner M.R."/>
            <person name="Cordes M.H."/>
            <person name="Baldwin K.L."/>
            <person name="Rynerson M.R."/>
            <person name="Burns S.N."/>
            <person name="Zobel-Thropp P.A."/>
        </authorList>
    </citation>
    <scope>NUCLEOTIDE SEQUENCE [MRNA]</scope>
    <scope>NOMENCLATURE</scope>
    <source>
        <tissue>Venom gland</tissue>
    </source>
</reference>
<protein>
    <recommendedName>
        <fullName evidence="6">Dermonecrotic toxin SpeSicTox-betaIIA3i</fullName>
        <ecNumber evidence="4">4.6.1.-</ecNumber>
    </recommendedName>
    <alternativeName>
        <fullName>Phospholipase D</fullName>
        <shortName>PLD</shortName>
    </alternativeName>
    <alternativeName>
        <fullName>Sphingomyelin phosphodiesterase D</fullName>
        <shortName>SMD</shortName>
        <shortName>SMase D</shortName>
        <shortName>Sphingomyelinase D</shortName>
    </alternativeName>
</protein>
<proteinExistence type="evidence at transcript level"/>
<dbReference type="EC" id="4.6.1.-" evidence="4"/>
<dbReference type="EMBL" id="FJ171491">
    <property type="protein sequence ID" value="ACN48987.1"/>
    <property type="molecule type" value="mRNA"/>
</dbReference>
<dbReference type="SMR" id="C0JB56"/>
<dbReference type="GO" id="GO:0005576">
    <property type="term" value="C:extracellular region"/>
    <property type="evidence" value="ECO:0007669"/>
    <property type="project" value="UniProtKB-SubCell"/>
</dbReference>
<dbReference type="GO" id="GO:0016829">
    <property type="term" value="F:lyase activity"/>
    <property type="evidence" value="ECO:0007669"/>
    <property type="project" value="UniProtKB-KW"/>
</dbReference>
<dbReference type="GO" id="GO:0046872">
    <property type="term" value="F:metal ion binding"/>
    <property type="evidence" value="ECO:0007669"/>
    <property type="project" value="UniProtKB-KW"/>
</dbReference>
<dbReference type="GO" id="GO:0008081">
    <property type="term" value="F:phosphoric diester hydrolase activity"/>
    <property type="evidence" value="ECO:0007669"/>
    <property type="project" value="InterPro"/>
</dbReference>
<dbReference type="GO" id="GO:0090729">
    <property type="term" value="F:toxin activity"/>
    <property type="evidence" value="ECO:0007669"/>
    <property type="project" value="UniProtKB-KW"/>
</dbReference>
<dbReference type="GO" id="GO:0031640">
    <property type="term" value="P:killing of cells of another organism"/>
    <property type="evidence" value="ECO:0007669"/>
    <property type="project" value="UniProtKB-KW"/>
</dbReference>
<dbReference type="GO" id="GO:0016042">
    <property type="term" value="P:lipid catabolic process"/>
    <property type="evidence" value="ECO:0007669"/>
    <property type="project" value="UniProtKB-KW"/>
</dbReference>
<dbReference type="CDD" id="cd08576">
    <property type="entry name" value="GDPD_like_SMaseD_PLD"/>
    <property type="match status" value="1"/>
</dbReference>
<dbReference type="Gene3D" id="3.20.20.190">
    <property type="entry name" value="Phosphatidylinositol (PI) phosphodiesterase"/>
    <property type="match status" value="1"/>
</dbReference>
<dbReference type="InterPro" id="IPR017946">
    <property type="entry name" value="PLC-like_Pdiesterase_TIM-brl"/>
</dbReference>
<dbReference type="SUPFAM" id="SSF51695">
    <property type="entry name" value="PLC-like phosphodiesterases"/>
    <property type="match status" value="1"/>
</dbReference>
<accession>C0JB56</accession>
<name>B2J1_SICPE</name>
<feature type="chain" id="PRO_0000392879" description="Dermonecrotic toxin SpeSicTox-betaIIA3i">
    <location>
        <begin position="1" status="less than"/>
        <end position="275"/>
    </location>
</feature>
<feature type="active site" evidence="5">
    <location>
        <position position="5"/>
    </location>
</feature>
<feature type="active site" description="Nucleophile" evidence="5">
    <location>
        <position position="41"/>
    </location>
</feature>
<feature type="binding site" evidence="5">
    <location>
        <position position="25"/>
    </location>
    <ligand>
        <name>Mg(2+)</name>
        <dbReference type="ChEBI" id="CHEBI:18420"/>
    </ligand>
</feature>
<feature type="binding site" evidence="5">
    <location>
        <position position="27"/>
    </location>
    <ligand>
        <name>Mg(2+)</name>
        <dbReference type="ChEBI" id="CHEBI:18420"/>
    </ligand>
</feature>
<feature type="binding site" evidence="5">
    <location>
        <position position="85"/>
    </location>
    <ligand>
        <name>Mg(2+)</name>
        <dbReference type="ChEBI" id="CHEBI:18420"/>
    </ligand>
</feature>
<feature type="disulfide bond" evidence="3">
    <location>
        <begin position="45"/>
        <end position="51"/>
    </location>
</feature>
<feature type="disulfide bond" evidence="3">
    <location>
        <begin position="47"/>
        <end position="190"/>
    </location>
</feature>
<feature type="non-terminal residue">
    <location>
        <position position="1"/>
    </location>
</feature>
<sequence length="275" mass="31721">WIMGHMVNAIEQVDEFLDLGANAIEFDVDFDDDGVAKYTHHGIPCDCGRLCTKYAVFTEYLDYVRQVTTPGDPKFRKELVLLALDLKLQRISSEKAYAAGVDVATKLLDHYWMRGWNGGRAYILLNIPLVEDYEFIRAFKDTLRKEGHEQYNAKVGINFTGNEDLDEIREVLEKLGEDEHIWQADGITSCFPRGTERLKKALEKRDTPGYKYIPKVYAWTLVRSSIMRRSLRLGVDGVMSNYPDSVVKVLKEKEFSDKFRLATYADNPWEKFTPI</sequence>